<evidence type="ECO:0000255" key="1">
    <source>
        <dbReference type="HAMAP-Rule" id="MF_00292"/>
    </source>
</evidence>
<evidence type="ECO:0000305" key="2"/>
<dbReference type="EMBL" id="AE010299">
    <property type="protein sequence ID" value="AAM04936.1"/>
    <property type="molecule type" value="Genomic_DNA"/>
</dbReference>
<dbReference type="SMR" id="Q8TQL8"/>
<dbReference type="FunCoup" id="Q8TQL8">
    <property type="interactions" value="140"/>
</dbReference>
<dbReference type="STRING" id="188937.MA_1522"/>
<dbReference type="EnsemblBacteria" id="AAM04936">
    <property type="protein sequence ID" value="AAM04936"/>
    <property type="gene ID" value="MA_1522"/>
</dbReference>
<dbReference type="KEGG" id="mac:MA_1522"/>
<dbReference type="HOGENOM" id="CLU_178987_2_1_2"/>
<dbReference type="InParanoid" id="Q8TQL8"/>
<dbReference type="PhylomeDB" id="Q8TQL8"/>
<dbReference type="Proteomes" id="UP000002487">
    <property type="component" value="Chromosome"/>
</dbReference>
<dbReference type="GO" id="GO:0022627">
    <property type="term" value="C:cytosolic small ribosomal subunit"/>
    <property type="evidence" value="ECO:0000318"/>
    <property type="project" value="GO_Central"/>
</dbReference>
<dbReference type="GO" id="GO:0003735">
    <property type="term" value="F:structural constituent of ribosome"/>
    <property type="evidence" value="ECO:0000318"/>
    <property type="project" value="GO_Central"/>
</dbReference>
<dbReference type="GO" id="GO:0030490">
    <property type="term" value="P:maturation of SSU-rRNA"/>
    <property type="evidence" value="ECO:0000318"/>
    <property type="project" value="GO_Central"/>
</dbReference>
<dbReference type="GO" id="GO:0000028">
    <property type="term" value="P:ribosomal small subunit assembly"/>
    <property type="evidence" value="ECO:0000318"/>
    <property type="project" value="GO_Central"/>
</dbReference>
<dbReference type="GO" id="GO:0006412">
    <property type="term" value="P:translation"/>
    <property type="evidence" value="ECO:0007669"/>
    <property type="project" value="UniProtKB-UniRule"/>
</dbReference>
<dbReference type="CDD" id="cd04457">
    <property type="entry name" value="S1_S28E"/>
    <property type="match status" value="1"/>
</dbReference>
<dbReference type="FunFam" id="2.40.50.140:FF:000145">
    <property type="entry name" value="30S ribosomal protein S28e"/>
    <property type="match status" value="1"/>
</dbReference>
<dbReference type="Gene3D" id="2.40.50.140">
    <property type="entry name" value="Nucleic acid-binding proteins"/>
    <property type="match status" value="1"/>
</dbReference>
<dbReference type="HAMAP" id="MF_00292">
    <property type="entry name" value="Ribosomal_eS28"/>
    <property type="match status" value="1"/>
</dbReference>
<dbReference type="InterPro" id="IPR012340">
    <property type="entry name" value="NA-bd_OB-fold"/>
</dbReference>
<dbReference type="InterPro" id="IPR000289">
    <property type="entry name" value="Ribosomal_eS28"/>
</dbReference>
<dbReference type="NCBIfam" id="NF003080">
    <property type="entry name" value="PRK04007.1"/>
    <property type="match status" value="1"/>
</dbReference>
<dbReference type="PANTHER" id="PTHR10769">
    <property type="entry name" value="40S RIBOSOMAL PROTEIN S28"/>
    <property type="match status" value="1"/>
</dbReference>
<dbReference type="PANTHER" id="PTHR10769:SF3">
    <property type="entry name" value="SMALL RIBOSOMAL SUBUNIT PROTEIN ES28"/>
    <property type="match status" value="1"/>
</dbReference>
<dbReference type="Pfam" id="PF01200">
    <property type="entry name" value="Ribosomal_S28e"/>
    <property type="match status" value="1"/>
</dbReference>
<dbReference type="SUPFAM" id="SSF50249">
    <property type="entry name" value="Nucleic acid-binding proteins"/>
    <property type="match status" value="1"/>
</dbReference>
<name>RS28_METAC</name>
<protein>
    <recommendedName>
        <fullName evidence="1">Small ribosomal subunit protein eS28</fullName>
    </recommendedName>
    <alternativeName>
        <fullName evidence="2">30S ribosomal protein S28e</fullName>
    </alternativeName>
</protein>
<comment type="similarity">
    <text evidence="1">Belongs to the eukaryotic ribosomal protein eS28 family.</text>
</comment>
<reference key="1">
    <citation type="journal article" date="2002" name="Genome Res.">
        <title>The genome of Methanosarcina acetivorans reveals extensive metabolic and physiological diversity.</title>
        <authorList>
            <person name="Galagan J.E."/>
            <person name="Nusbaum C."/>
            <person name="Roy A."/>
            <person name="Endrizzi M.G."/>
            <person name="Macdonald P."/>
            <person name="FitzHugh W."/>
            <person name="Calvo S."/>
            <person name="Engels R."/>
            <person name="Smirnov S."/>
            <person name="Atnoor D."/>
            <person name="Brown A."/>
            <person name="Allen N."/>
            <person name="Naylor J."/>
            <person name="Stange-Thomann N."/>
            <person name="DeArellano K."/>
            <person name="Johnson R."/>
            <person name="Linton L."/>
            <person name="McEwan P."/>
            <person name="McKernan K."/>
            <person name="Talamas J."/>
            <person name="Tirrell A."/>
            <person name="Ye W."/>
            <person name="Zimmer A."/>
            <person name="Barber R.D."/>
            <person name="Cann I."/>
            <person name="Graham D.E."/>
            <person name="Grahame D.A."/>
            <person name="Guss A.M."/>
            <person name="Hedderich R."/>
            <person name="Ingram-Smith C."/>
            <person name="Kuettner H.C."/>
            <person name="Krzycki J.A."/>
            <person name="Leigh J.A."/>
            <person name="Li W."/>
            <person name="Liu J."/>
            <person name="Mukhopadhyay B."/>
            <person name="Reeve J.N."/>
            <person name="Smith K."/>
            <person name="Springer T.A."/>
            <person name="Umayam L.A."/>
            <person name="White O."/>
            <person name="White R.H."/>
            <person name="de Macario E.C."/>
            <person name="Ferry J.G."/>
            <person name="Jarrell K.F."/>
            <person name="Jing H."/>
            <person name="Macario A.J.L."/>
            <person name="Paulsen I.T."/>
            <person name="Pritchett M."/>
            <person name="Sowers K.R."/>
            <person name="Swanson R.V."/>
            <person name="Zinder S.H."/>
            <person name="Lander E."/>
            <person name="Metcalf W.W."/>
            <person name="Birren B."/>
        </authorList>
    </citation>
    <scope>NUCLEOTIDE SEQUENCE [LARGE SCALE GENOMIC DNA]</scope>
    <source>
        <strain>ATCC 35395 / DSM 2834 / JCM 12185 / C2A</strain>
    </source>
</reference>
<keyword id="KW-1185">Reference proteome</keyword>
<keyword id="KW-0687">Ribonucleoprotein</keyword>
<keyword id="KW-0689">Ribosomal protein</keyword>
<proteinExistence type="inferred from homology"/>
<feature type="chain" id="PRO_0000136847" description="Small ribosomal subunit protein eS28">
    <location>
        <begin position="1"/>
        <end position="76"/>
    </location>
</feature>
<accession>Q8TQL8</accession>
<sequence length="76" mass="8258">MLIMAEESTIGGFAAEVIDVIGNTGMHGEASQIQCRVLEGRDKGRVITRNCVGPVRIGDILMLLETSREAKKLTTR</sequence>
<gene>
    <name evidence="1" type="primary">rps28e</name>
    <name type="ordered locus">MA_1522</name>
</gene>
<organism>
    <name type="scientific">Methanosarcina acetivorans (strain ATCC 35395 / DSM 2834 / JCM 12185 / C2A)</name>
    <dbReference type="NCBI Taxonomy" id="188937"/>
    <lineage>
        <taxon>Archaea</taxon>
        <taxon>Methanobacteriati</taxon>
        <taxon>Methanobacteriota</taxon>
        <taxon>Stenosarchaea group</taxon>
        <taxon>Methanomicrobia</taxon>
        <taxon>Methanosarcinales</taxon>
        <taxon>Methanosarcinaceae</taxon>
        <taxon>Methanosarcina</taxon>
    </lineage>
</organism>